<keyword id="KW-0687">Ribonucleoprotein</keyword>
<keyword id="KW-0689">Ribosomal protein</keyword>
<protein>
    <recommendedName>
        <fullName evidence="1">Small ribosomal subunit protein uS9</fullName>
    </recommendedName>
    <alternativeName>
        <fullName evidence="2">30S ribosomal protein S9</fullName>
    </alternativeName>
</protein>
<comment type="similarity">
    <text evidence="1">Belongs to the universal ribosomal protein uS9 family.</text>
</comment>
<gene>
    <name evidence="1" type="primary">rpsI</name>
    <name type="ordered locus">SPC_3414</name>
</gene>
<dbReference type="EMBL" id="CP000857">
    <property type="protein sequence ID" value="ACN47499.1"/>
    <property type="molecule type" value="Genomic_DNA"/>
</dbReference>
<dbReference type="RefSeq" id="WP_000829813.1">
    <property type="nucleotide sequence ID" value="NC_012125.1"/>
</dbReference>
<dbReference type="SMR" id="C0PZN9"/>
<dbReference type="KEGG" id="sei:SPC_3414"/>
<dbReference type="HOGENOM" id="CLU_046483_2_1_6"/>
<dbReference type="Proteomes" id="UP000001599">
    <property type="component" value="Chromosome"/>
</dbReference>
<dbReference type="GO" id="GO:0022627">
    <property type="term" value="C:cytosolic small ribosomal subunit"/>
    <property type="evidence" value="ECO:0007669"/>
    <property type="project" value="TreeGrafter"/>
</dbReference>
<dbReference type="GO" id="GO:0003723">
    <property type="term" value="F:RNA binding"/>
    <property type="evidence" value="ECO:0007669"/>
    <property type="project" value="TreeGrafter"/>
</dbReference>
<dbReference type="GO" id="GO:0003735">
    <property type="term" value="F:structural constituent of ribosome"/>
    <property type="evidence" value="ECO:0007669"/>
    <property type="project" value="InterPro"/>
</dbReference>
<dbReference type="GO" id="GO:0006412">
    <property type="term" value="P:translation"/>
    <property type="evidence" value="ECO:0007669"/>
    <property type="project" value="UniProtKB-UniRule"/>
</dbReference>
<dbReference type="FunFam" id="3.30.230.10:FF:000001">
    <property type="entry name" value="30S ribosomal protein S9"/>
    <property type="match status" value="1"/>
</dbReference>
<dbReference type="Gene3D" id="3.30.230.10">
    <property type="match status" value="1"/>
</dbReference>
<dbReference type="HAMAP" id="MF_00532_B">
    <property type="entry name" value="Ribosomal_uS9_B"/>
    <property type="match status" value="1"/>
</dbReference>
<dbReference type="InterPro" id="IPR020568">
    <property type="entry name" value="Ribosomal_Su5_D2-typ_SF"/>
</dbReference>
<dbReference type="InterPro" id="IPR000754">
    <property type="entry name" value="Ribosomal_uS9"/>
</dbReference>
<dbReference type="InterPro" id="IPR023035">
    <property type="entry name" value="Ribosomal_uS9_bac/plastid"/>
</dbReference>
<dbReference type="InterPro" id="IPR020574">
    <property type="entry name" value="Ribosomal_uS9_CS"/>
</dbReference>
<dbReference type="InterPro" id="IPR014721">
    <property type="entry name" value="Ribsml_uS5_D2-typ_fold_subgr"/>
</dbReference>
<dbReference type="NCBIfam" id="NF001099">
    <property type="entry name" value="PRK00132.1"/>
    <property type="match status" value="1"/>
</dbReference>
<dbReference type="PANTHER" id="PTHR21569">
    <property type="entry name" value="RIBOSOMAL PROTEIN S9"/>
    <property type="match status" value="1"/>
</dbReference>
<dbReference type="PANTHER" id="PTHR21569:SF1">
    <property type="entry name" value="SMALL RIBOSOMAL SUBUNIT PROTEIN US9M"/>
    <property type="match status" value="1"/>
</dbReference>
<dbReference type="Pfam" id="PF00380">
    <property type="entry name" value="Ribosomal_S9"/>
    <property type="match status" value="1"/>
</dbReference>
<dbReference type="SUPFAM" id="SSF54211">
    <property type="entry name" value="Ribosomal protein S5 domain 2-like"/>
    <property type="match status" value="1"/>
</dbReference>
<dbReference type="PROSITE" id="PS00360">
    <property type="entry name" value="RIBOSOMAL_S9"/>
    <property type="match status" value="1"/>
</dbReference>
<proteinExistence type="inferred from homology"/>
<sequence>MAENQYYGTGRRKSSAARVFIKPGNGKIVINQRSLEQYFGRETARMVVRQPLELVDMVEKLDLYITVKGGGISGQAGAIRHGITRALIEYDESLRGELRKAGFVTRDARQVERKKVGLRKARRRPQFSKR</sequence>
<reference key="1">
    <citation type="journal article" date="2009" name="PLoS ONE">
        <title>Salmonella paratyphi C: genetic divergence from Salmonella choleraesuis and pathogenic convergence with Salmonella typhi.</title>
        <authorList>
            <person name="Liu W.-Q."/>
            <person name="Feng Y."/>
            <person name="Wang Y."/>
            <person name="Zou Q.-H."/>
            <person name="Chen F."/>
            <person name="Guo J.-T."/>
            <person name="Peng Y.-H."/>
            <person name="Jin Y."/>
            <person name="Li Y.-G."/>
            <person name="Hu S.-N."/>
            <person name="Johnston R.N."/>
            <person name="Liu G.-R."/>
            <person name="Liu S.-L."/>
        </authorList>
    </citation>
    <scope>NUCLEOTIDE SEQUENCE [LARGE SCALE GENOMIC DNA]</scope>
    <source>
        <strain>RKS4594</strain>
    </source>
</reference>
<name>RS9_SALPC</name>
<accession>C0PZN9</accession>
<evidence type="ECO:0000255" key="1">
    <source>
        <dbReference type="HAMAP-Rule" id="MF_00532"/>
    </source>
</evidence>
<evidence type="ECO:0000305" key="2"/>
<feature type="chain" id="PRO_1000146468" description="Small ribosomal subunit protein uS9">
    <location>
        <begin position="1"/>
        <end position="130"/>
    </location>
</feature>
<organism>
    <name type="scientific">Salmonella paratyphi C (strain RKS4594)</name>
    <dbReference type="NCBI Taxonomy" id="476213"/>
    <lineage>
        <taxon>Bacteria</taxon>
        <taxon>Pseudomonadati</taxon>
        <taxon>Pseudomonadota</taxon>
        <taxon>Gammaproteobacteria</taxon>
        <taxon>Enterobacterales</taxon>
        <taxon>Enterobacteriaceae</taxon>
        <taxon>Salmonella</taxon>
    </lineage>
</organism>